<comment type="function">
    <text evidence="1">Core subunit of the mitochondrial membrane respiratory chain NADH dehydrogenase (Complex I) that is believed to belong to the minimal assembly required for catalysis. Complex I functions in the transfer of electrons from NADH to the respiratory chain. The immediate electron acceptor for the enzyme is believed to be ubiquinone (By similarity).</text>
</comment>
<comment type="catalytic activity">
    <reaction>
        <text>a ubiquinone + NADH + 5 H(+)(in) = a ubiquinol + NAD(+) + 4 H(+)(out)</text>
        <dbReference type="Rhea" id="RHEA:29091"/>
        <dbReference type="Rhea" id="RHEA-COMP:9565"/>
        <dbReference type="Rhea" id="RHEA-COMP:9566"/>
        <dbReference type="ChEBI" id="CHEBI:15378"/>
        <dbReference type="ChEBI" id="CHEBI:16389"/>
        <dbReference type="ChEBI" id="CHEBI:17976"/>
        <dbReference type="ChEBI" id="CHEBI:57540"/>
        <dbReference type="ChEBI" id="CHEBI:57945"/>
        <dbReference type="EC" id="7.1.1.2"/>
    </reaction>
</comment>
<comment type="subunit">
    <text evidence="1">Complex I is composed of about 45 different subunits.</text>
</comment>
<comment type="subcellular location">
    <subcellularLocation>
        <location evidence="1">Mitochondrion inner membrane</location>
    </subcellularLocation>
</comment>
<comment type="similarity">
    <text evidence="2">Belongs to the complex I 30 kDa subunit family.</text>
</comment>
<reference key="1">
    <citation type="journal article" date="1990" name="Plant Mol. Biol.">
        <title>ORF209 of Dictyostelium discoideum mitochondrial DNA has a homologue in chloroplast DNA.</title>
        <authorList>
            <person name="Tanaka Y."/>
            <person name="Kuroe K."/>
            <person name="Angata K."/>
            <person name="Yanagisawa K."/>
        </authorList>
    </citation>
    <scope>NUCLEOTIDE SEQUENCE [GENOMIC DNA]</scope>
</reference>
<reference key="2">
    <citation type="journal article" date="2000" name="Mol. Gen. Genet.">
        <title>The mitochondrial DNA of Dictyostelium discoideum: complete sequence, gene content and genome organization.</title>
        <authorList>
            <person name="Ogawa S."/>
            <person name="Yoshino R."/>
            <person name="Angata K."/>
            <person name="Iwamoto M."/>
            <person name="Pi M."/>
            <person name="Kuroe K."/>
            <person name="Matsuo K."/>
            <person name="Morio T."/>
            <person name="Urushihara H."/>
            <person name="Yanagisawa K."/>
            <person name="Tanaka Y."/>
        </authorList>
    </citation>
    <scope>NUCLEOTIDE SEQUENCE [LARGE SCALE GENOMIC DNA]</scope>
    <source>
        <strain>AX3</strain>
    </source>
</reference>
<organism>
    <name type="scientific">Dictyostelium discoideum</name>
    <name type="common">Social amoeba</name>
    <dbReference type="NCBI Taxonomy" id="44689"/>
    <lineage>
        <taxon>Eukaryota</taxon>
        <taxon>Amoebozoa</taxon>
        <taxon>Evosea</taxon>
        <taxon>Eumycetozoa</taxon>
        <taxon>Dictyostelia</taxon>
        <taxon>Dictyosteliales</taxon>
        <taxon>Dictyosteliaceae</taxon>
        <taxon>Dictyostelium</taxon>
    </lineage>
</organism>
<name>NDUS3_DICDI</name>
<geneLocation type="mitochondrion"/>
<proteinExistence type="inferred from homology"/>
<evidence type="ECO:0000250" key="1"/>
<evidence type="ECO:0000305" key="2"/>
<feature type="chain" id="PRO_0000118645" description="NADH-ubiquinone oxidoreductase subunit 9">
    <location>
        <begin position="1"/>
        <end position="209"/>
    </location>
</feature>
<dbReference type="EC" id="7.1.1.2"/>
<dbReference type="EMBL" id="X52680">
    <property type="protein sequence ID" value="CAA36903.1"/>
    <property type="molecule type" value="Genomic_DNA"/>
</dbReference>
<dbReference type="EMBL" id="AB000109">
    <property type="protein sequence ID" value="BAA78066.1"/>
    <property type="molecule type" value="Genomic_DNA"/>
</dbReference>
<dbReference type="PIR" id="S12247">
    <property type="entry name" value="S12247"/>
</dbReference>
<dbReference type="RefSeq" id="NP_050084.1">
    <property type="nucleotide sequence ID" value="NC_000895.1"/>
</dbReference>
<dbReference type="SMR" id="P22237"/>
<dbReference type="FunCoup" id="P22237">
    <property type="interactions" value="213"/>
</dbReference>
<dbReference type="STRING" id="44689.P22237"/>
<dbReference type="GeneID" id="2193912"/>
<dbReference type="KEGG" id="ddi:DidioMp17"/>
<dbReference type="dictyBase" id="DDB_G0294032">
    <property type="gene designation" value="nad9"/>
</dbReference>
<dbReference type="VEuPathDB" id="AmoebaDB:DidioMp17"/>
<dbReference type="InParanoid" id="P22237"/>
<dbReference type="PhylomeDB" id="P22237"/>
<dbReference type="Reactome" id="R-DDI-6799198">
    <property type="pathway name" value="Complex I biogenesis"/>
</dbReference>
<dbReference type="Reactome" id="R-DDI-9013408">
    <property type="pathway name" value="RHOG GTPase cycle"/>
</dbReference>
<dbReference type="PRO" id="PR:P22237"/>
<dbReference type="Proteomes" id="UP000002195">
    <property type="component" value="Mitochondrion"/>
</dbReference>
<dbReference type="GO" id="GO:0005743">
    <property type="term" value="C:mitochondrial inner membrane"/>
    <property type="evidence" value="ECO:0007669"/>
    <property type="project" value="UniProtKB-SubCell"/>
</dbReference>
<dbReference type="GO" id="GO:0045271">
    <property type="term" value="C:respiratory chain complex I"/>
    <property type="evidence" value="ECO:0000318"/>
    <property type="project" value="GO_Central"/>
</dbReference>
<dbReference type="GO" id="GO:0008137">
    <property type="term" value="F:NADH dehydrogenase (ubiquinone) activity"/>
    <property type="evidence" value="ECO:0007669"/>
    <property type="project" value="UniProtKB-EC"/>
</dbReference>
<dbReference type="Gene3D" id="3.30.460.80">
    <property type="entry name" value="NADH:ubiquinone oxidoreductase, 30kDa subunit"/>
    <property type="match status" value="1"/>
</dbReference>
<dbReference type="HAMAP" id="MF_01357">
    <property type="entry name" value="NDH1_NuoC"/>
    <property type="match status" value="1"/>
</dbReference>
<dbReference type="InterPro" id="IPR010218">
    <property type="entry name" value="NADH_DH_suC"/>
</dbReference>
<dbReference type="InterPro" id="IPR037232">
    <property type="entry name" value="NADH_quin_OxRdtase_su_C/D-like"/>
</dbReference>
<dbReference type="InterPro" id="IPR001268">
    <property type="entry name" value="NADH_UbQ_OxRdtase_30kDa_su"/>
</dbReference>
<dbReference type="InterPro" id="IPR020396">
    <property type="entry name" value="NADH_UbQ_OxRdtase_CS"/>
</dbReference>
<dbReference type="PANTHER" id="PTHR10884:SF14">
    <property type="entry name" value="NADH DEHYDROGENASE [UBIQUINONE] IRON-SULFUR PROTEIN 3, MITOCHONDRIAL"/>
    <property type="match status" value="1"/>
</dbReference>
<dbReference type="PANTHER" id="PTHR10884">
    <property type="entry name" value="NADH DEHYDROGENASE UBIQUINONE IRON-SULFUR PROTEIN 3"/>
    <property type="match status" value="1"/>
</dbReference>
<dbReference type="Pfam" id="PF00329">
    <property type="entry name" value="Complex1_30kDa"/>
    <property type="match status" value="1"/>
</dbReference>
<dbReference type="SUPFAM" id="SSF143243">
    <property type="entry name" value="Nqo5-like"/>
    <property type="match status" value="1"/>
</dbReference>
<dbReference type="PROSITE" id="PS00542">
    <property type="entry name" value="COMPLEX1_30K"/>
    <property type="match status" value="1"/>
</dbReference>
<protein>
    <recommendedName>
        <fullName>NADH-ubiquinone oxidoreductase subunit 9</fullName>
        <ecNumber>7.1.1.2</ecNumber>
    </recommendedName>
</protein>
<keyword id="KW-0249">Electron transport</keyword>
<keyword id="KW-0472">Membrane</keyword>
<keyword id="KW-0496">Mitochondrion</keyword>
<keyword id="KW-0999">Mitochondrion inner membrane</keyword>
<keyword id="KW-0520">NAD</keyword>
<keyword id="KW-0560">Oxidoreductase</keyword>
<keyword id="KW-1185">Reference proteome</keyword>
<keyword id="KW-0679">Respiratory chain</keyword>
<keyword id="KW-1278">Translocase</keyword>
<keyword id="KW-0813">Transport</keyword>
<keyword id="KW-0830">Ubiquinone</keyword>
<gene>
    <name type="primary">nad9</name>
    <name type="synonym">ndufs3</name>
    <name type="synonym">noxA</name>
    <name type="ORF">DDB_G0294032</name>
</gene>
<sequence>MKDYKNELKVKINLGEHLRLSIPGLVKKIMYKTHYLEIQVEKEKMLTVLKYLKEASKYQCNMLLDIVCVDCLNIEEIKIGRFKLIYVLNSIYNNTRVHLSTYVENNGIIETTSGLFESSVWLEREIWDMFGIYFEKHPDLRRILTDYGFVGYPLKKDFPITGYLEVYYDVNDKKIIYKPIELMQEYRNYNFGAVWGDYERKVYLENIIK</sequence>
<accession>P22237</accession>